<dbReference type="EC" id="5.4.2.10" evidence="1"/>
<dbReference type="EMBL" id="CP001197">
    <property type="protein sequence ID" value="ACL07020.1"/>
    <property type="molecule type" value="Genomic_DNA"/>
</dbReference>
<dbReference type="SMR" id="B8DN76"/>
<dbReference type="STRING" id="883.DvMF_0059"/>
<dbReference type="KEGG" id="dvm:DvMF_0059"/>
<dbReference type="eggNOG" id="COG1109">
    <property type="taxonomic scope" value="Bacteria"/>
</dbReference>
<dbReference type="HOGENOM" id="CLU_016950_7_0_7"/>
<dbReference type="OrthoDB" id="9806956at2"/>
<dbReference type="GO" id="GO:0005829">
    <property type="term" value="C:cytosol"/>
    <property type="evidence" value="ECO:0007669"/>
    <property type="project" value="TreeGrafter"/>
</dbReference>
<dbReference type="GO" id="GO:0000287">
    <property type="term" value="F:magnesium ion binding"/>
    <property type="evidence" value="ECO:0007669"/>
    <property type="project" value="UniProtKB-UniRule"/>
</dbReference>
<dbReference type="GO" id="GO:0008966">
    <property type="term" value="F:phosphoglucosamine mutase activity"/>
    <property type="evidence" value="ECO:0007669"/>
    <property type="project" value="UniProtKB-UniRule"/>
</dbReference>
<dbReference type="GO" id="GO:0004615">
    <property type="term" value="F:phosphomannomutase activity"/>
    <property type="evidence" value="ECO:0007669"/>
    <property type="project" value="TreeGrafter"/>
</dbReference>
<dbReference type="GO" id="GO:0005975">
    <property type="term" value="P:carbohydrate metabolic process"/>
    <property type="evidence" value="ECO:0007669"/>
    <property type="project" value="InterPro"/>
</dbReference>
<dbReference type="GO" id="GO:0009252">
    <property type="term" value="P:peptidoglycan biosynthetic process"/>
    <property type="evidence" value="ECO:0007669"/>
    <property type="project" value="TreeGrafter"/>
</dbReference>
<dbReference type="GO" id="GO:0006048">
    <property type="term" value="P:UDP-N-acetylglucosamine biosynthetic process"/>
    <property type="evidence" value="ECO:0007669"/>
    <property type="project" value="TreeGrafter"/>
</dbReference>
<dbReference type="CDD" id="cd05802">
    <property type="entry name" value="GlmM"/>
    <property type="match status" value="1"/>
</dbReference>
<dbReference type="FunFam" id="3.30.310.50:FF:000001">
    <property type="entry name" value="Phosphoglucosamine mutase"/>
    <property type="match status" value="1"/>
</dbReference>
<dbReference type="FunFam" id="3.40.120.10:FF:000001">
    <property type="entry name" value="Phosphoglucosamine mutase"/>
    <property type="match status" value="1"/>
</dbReference>
<dbReference type="FunFam" id="3.40.120.10:FF:000002">
    <property type="entry name" value="Phosphoglucosamine mutase"/>
    <property type="match status" value="1"/>
</dbReference>
<dbReference type="Gene3D" id="3.40.120.10">
    <property type="entry name" value="Alpha-D-Glucose-1,6-Bisphosphate, subunit A, domain 3"/>
    <property type="match status" value="3"/>
</dbReference>
<dbReference type="Gene3D" id="3.30.310.50">
    <property type="entry name" value="Alpha-D-phosphohexomutase, C-terminal domain"/>
    <property type="match status" value="1"/>
</dbReference>
<dbReference type="HAMAP" id="MF_01554_B">
    <property type="entry name" value="GlmM_B"/>
    <property type="match status" value="1"/>
</dbReference>
<dbReference type="InterPro" id="IPR005844">
    <property type="entry name" value="A-D-PHexomutase_a/b/a-I"/>
</dbReference>
<dbReference type="InterPro" id="IPR016055">
    <property type="entry name" value="A-D-PHexomutase_a/b/a-I/II/III"/>
</dbReference>
<dbReference type="InterPro" id="IPR005845">
    <property type="entry name" value="A-D-PHexomutase_a/b/a-II"/>
</dbReference>
<dbReference type="InterPro" id="IPR005846">
    <property type="entry name" value="A-D-PHexomutase_a/b/a-III"/>
</dbReference>
<dbReference type="InterPro" id="IPR005843">
    <property type="entry name" value="A-D-PHexomutase_C"/>
</dbReference>
<dbReference type="InterPro" id="IPR036900">
    <property type="entry name" value="A-D-PHexomutase_C_sf"/>
</dbReference>
<dbReference type="InterPro" id="IPR016066">
    <property type="entry name" value="A-D-PHexomutase_CS"/>
</dbReference>
<dbReference type="InterPro" id="IPR005841">
    <property type="entry name" value="Alpha-D-phosphohexomutase_SF"/>
</dbReference>
<dbReference type="InterPro" id="IPR006352">
    <property type="entry name" value="GlmM_bact"/>
</dbReference>
<dbReference type="InterPro" id="IPR050060">
    <property type="entry name" value="Phosphoglucosamine_mutase"/>
</dbReference>
<dbReference type="NCBIfam" id="TIGR01455">
    <property type="entry name" value="glmM"/>
    <property type="match status" value="1"/>
</dbReference>
<dbReference type="NCBIfam" id="NF008139">
    <property type="entry name" value="PRK10887.1"/>
    <property type="match status" value="1"/>
</dbReference>
<dbReference type="PANTHER" id="PTHR42946:SF1">
    <property type="entry name" value="PHOSPHOGLUCOMUTASE (ALPHA-D-GLUCOSE-1,6-BISPHOSPHATE-DEPENDENT)"/>
    <property type="match status" value="1"/>
</dbReference>
<dbReference type="PANTHER" id="PTHR42946">
    <property type="entry name" value="PHOSPHOHEXOSE MUTASE"/>
    <property type="match status" value="1"/>
</dbReference>
<dbReference type="Pfam" id="PF02878">
    <property type="entry name" value="PGM_PMM_I"/>
    <property type="match status" value="1"/>
</dbReference>
<dbReference type="Pfam" id="PF02879">
    <property type="entry name" value="PGM_PMM_II"/>
    <property type="match status" value="1"/>
</dbReference>
<dbReference type="Pfam" id="PF02880">
    <property type="entry name" value="PGM_PMM_III"/>
    <property type="match status" value="1"/>
</dbReference>
<dbReference type="Pfam" id="PF00408">
    <property type="entry name" value="PGM_PMM_IV"/>
    <property type="match status" value="1"/>
</dbReference>
<dbReference type="PRINTS" id="PR00509">
    <property type="entry name" value="PGMPMM"/>
</dbReference>
<dbReference type="SUPFAM" id="SSF55957">
    <property type="entry name" value="Phosphoglucomutase, C-terminal domain"/>
    <property type="match status" value="1"/>
</dbReference>
<dbReference type="SUPFAM" id="SSF53738">
    <property type="entry name" value="Phosphoglucomutase, first 3 domains"/>
    <property type="match status" value="3"/>
</dbReference>
<dbReference type="PROSITE" id="PS00710">
    <property type="entry name" value="PGM_PMM"/>
    <property type="match status" value="1"/>
</dbReference>
<reference key="1">
    <citation type="submission" date="2008-10" db="EMBL/GenBank/DDBJ databases">
        <title>Complete sequence of Desulfovibrio vulgaris str. 'Miyazaki F'.</title>
        <authorList>
            <person name="Lucas S."/>
            <person name="Copeland A."/>
            <person name="Lapidus A."/>
            <person name="Glavina del Rio T."/>
            <person name="Dalin E."/>
            <person name="Tice H."/>
            <person name="Bruce D."/>
            <person name="Goodwin L."/>
            <person name="Pitluck S."/>
            <person name="Sims D."/>
            <person name="Brettin T."/>
            <person name="Detter J.C."/>
            <person name="Han C."/>
            <person name="Larimer F."/>
            <person name="Land M."/>
            <person name="Hauser L."/>
            <person name="Kyrpides N."/>
            <person name="Mikhailova N."/>
            <person name="Hazen T.C."/>
            <person name="Richardson P."/>
        </authorList>
    </citation>
    <scope>NUCLEOTIDE SEQUENCE [LARGE SCALE GENOMIC DNA]</scope>
    <source>
        <strain>DSM 19637 / Miyazaki F</strain>
    </source>
</reference>
<comment type="function">
    <text evidence="1">Catalyzes the conversion of glucosamine-6-phosphate to glucosamine-1-phosphate.</text>
</comment>
<comment type="catalytic activity">
    <reaction evidence="1">
        <text>alpha-D-glucosamine 1-phosphate = D-glucosamine 6-phosphate</text>
        <dbReference type="Rhea" id="RHEA:23424"/>
        <dbReference type="ChEBI" id="CHEBI:58516"/>
        <dbReference type="ChEBI" id="CHEBI:58725"/>
        <dbReference type="EC" id="5.4.2.10"/>
    </reaction>
</comment>
<comment type="cofactor">
    <cofactor evidence="1">
        <name>Mg(2+)</name>
        <dbReference type="ChEBI" id="CHEBI:18420"/>
    </cofactor>
    <text evidence="1">Binds 1 Mg(2+) ion per subunit.</text>
</comment>
<comment type="PTM">
    <text evidence="1">Activated by phosphorylation.</text>
</comment>
<comment type="similarity">
    <text evidence="1">Belongs to the phosphohexose mutase family.</text>
</comment>
<keyword id="KW-0413">Isomerase</keyword>
<keyword id="KW-0460">Magnesium</keyword>
<keyword id="KW-0479">Metal-binding</keyword>
<keyword id="KW-0597">Phosphoprotein</keyword>
<feature type="chain" id="PRO_1000201086" description="Phosphoglucosamine mutase">
    <location>
        <begin position="1"/>
        <end position="450"/>
    </location>
</feature>
<feature type="active site" description="Phosphoserine intermediate" evidence="1">
    <location>
        <position position="102"/>
    </location>
</feature>
<feature type="binding site" description="via phosphate group" evidence="1">
    <location>
        <position position="102"/>
    </location>
    <ligand>
        <name>Mg(2+)</name>
        <dbReference type="ChEBI" id="CHEBI:18420"/>
    </ligand>
</feature>
<feature type="binding site" evidence="1">
    <location>
        <position position="244"/>
    </location>
    <ligand>
        <name>Mg(2+)</name>
        <dbReference type="ChEBI" id="CHEBI:18420"/>
    </ligand>
</feature>
<feature type="binding site" evidence="1">
    <location>
        <position position="246"/>
    </location>
    <ligand>
        <name>Mg(2+)</name>
        <dbReference type="ChEBI" id="CHEBI:18420"/>
    </ligand>
</feature>
<feature type="binding site" evidence="1">
    <location>
        <position position="248"/>
    </location>
    <ligand>
        <name>Mg(2+)</name>
        <dbReference type="ChEBI" id="CHEBI:18420"/>
    </ligand>
</feature>
<feature type="modified residue" description="Phosphoserine" evidence="1">
    <location>
        <position position="102"/>
    </location>
</feature>
<proteinExistence type="inferred from homology"/>
<name>GLMM_NITV9</name>
<accession>B8DN76</accession>
<sequence length="450" mass="49351">MGKRLFGTDGLRGQVNIYPMTADVALRLGLAAGTHFRNGNRRHRVVIGKDTRLSGYVFESALTAGLCAAGMDVYLVGPLPTPAIAFLTRNMRADLGVVISASHNPFMDNGIKFFDKDGFKLPDEMENKITDMVLDPDWQWDYPAPERVGRAAKIEDSPGRYIVYLKNSFPAHLTLDGMRVVLDCANGANYKVAPLALEELGAEVIKIGTEPNGLNINHQCGSLYPGVAAGKVLETRADVGLALDGDADRLIVVDEKGTVLDGDQIMALCADDMLRRGALRNNTLVATVMSNMALEVYMKERGCKLLRTPVGDRYVVEAMRREGANLGGEQSGHLIFMDHGTTGDGLMAALQILRIMRERDRPLSELAGQLQLFPQELINVHVERKIPFEQCQPVLDGVAKVEAELGDRGRVLLRYSGTEAVCRVMVEGEDPEQVKRLASLLAETVQKHLR</sequence>
<gene>
    <name evidence="1" type="primary">glmM</name>
    <name type="ordered locus">DvMF_0059</name>
</gene>
<protein>
    <recommendedName>
        <fullName evidence="1">Phosphoglucosamine mutase</fullName>
        <ecNumber evidence="1">5.4.2.10</ecNumber>
    </recommendedName>
</protein>
<organism>
    <name type="scientific">Nitratidesulfovibrio vulgaris (strain DSM 19637 / Miyazaki F)</name>
    <name type="common">Desulfovibrio vulgaris</name>
    <dbReference type="NCBI Taxonomy" id="883"/>
    <lineage>
        <taxon>Bacteria</taxon>
        <taxon>Pseudomonadati</taxon>
        <taxon>Thermodesulfobacteriota</taxon>
        <taxon>Desulfovibrionia</taxon>
        <taxon>Desulfovibrionales</taxon>
        <taxon>Desulfovibrionaceae</taxon>
        <taxon>Nitratidesulfovibrio</taxon>
    </lineage>
</organism>
<evidence type="ECO:0000255" key="1">
    <source>
        <dbReference type="HAMAP-Rule" id="MF_01554"/>
    </source>
</evidence>